<keyword id="KW-0963">Cytoplasm</keyword>
<gene>
    <name evidence="1" type="primary">cutC</name>
    <name type="ordered locus">YPA_1430</name>
</gene>
<feature type="chain" id="PRO_1000046950" description="PF03932 family protein CutC">
    <location>
        <begin position="1"/>
        <end position="254"/>
    </location>
</feature>
<comment type="subcellular location">
    <subcellularLocation>
        <location evidence="1">Cytoplasm</location>
    </subcellularLocation>
</comment>
<comment type="similarity">
    <text evidence="1">Belongs to the CutC family.</text>
</comment>
<comment type="caution">
    <text evidence="1">Once thought to be involved in copper homeostasis, experiments in E.coli have shown this is not the case.</text>
</comment>
<reference key="1">
    <citation type="journal article" date="2006" name="J. Bacteriol.">
        <title>Complete genome sequence of Yersinia pestis strains Antiqua and Nepal516: evidence of gene reduction in an emerging pathogen.</title>
        <authorList>
            <person name="Chain P.S.G."/>
            <person name="Hu P."/>
            <person name="Malfatti S.A."/>
            <person name="Radnedge L."/>
            <person name="Larimer F."/>
            <person name="Vergez L.M."/>
            <person name="Worsham P."/>
            <person name="Chu M.C."/>
            <person name="Andersen G.L."/>
        </authorList>
    </citation>
    <scope>NUCLEOTIDE SEQUENCE [LARGE SCALE GENOMIC DNA]</scope>
    <source>
        <strain>Antiqua</strain>
    </source>
</reference>
<dbReference type="EMBL" id="CP000308">
    <property type="protein sequence ID" value="ABG13397.1"/>
    <property type="molecule type" value="Genomic_DNA"/>
</dbReference>
<dbReference type="RefSeq" id="WP_002211209.1">
    <property type="nucleotide sequence ID" value="NZ_CP009906.1"/>
</dbReference>
<dbReference type="SMR" id="Q1C825"/>
<dbReference type="GeneID" id="57976613"/>
<dbReference type="KEGG" id="ypa:YPA_1430"/>
<dbReference type="Proteomes" id="UP000001971">
    <property type="component" value="Chromosome"/>
</dbReference>
<dbReference type="GO" id="GO:0005737">
    <property type="term" value="C:cytoplasm"/>
    <property type="evidence" value="ECO:0007669"/>
    <property type="project" value="UniProtKB-SubCell"/>
</dbReference>
<dbReference type="GO" id="GO:0005507">
    <property type="term" value="F:copper ion binding"/>
    <property type="evidence" value="ECO:0007669"/>
    <property type="project" value="TreeGrafter"/>
</dbReference>
<dbReference type="FunFam" id="3.20.20.380:FF:000001">
    <property type="entry name" value="Copper homeostasis protein CutC"/>
    <property type="match status" value="1"/>
</dbReference>
<dbReference type="Gene3D" id="3.20.20.380">
    <property type="entry name" value="Copper homeostasis (CutC) domain"/>
    <property type="match status" value="1"/>
</dbReference>
<dbReference type="HAMAP" id="MF_00795">
    <property type="entry name" value="CutC"/>
    <property type="match status" value="1"/>
</dbReference>
<dbReference type="InterPro" id="IPR005627">
    <property type="entry name" value="CutC-like"/>
</dbReference>
<dbReference type="InterPro" id="IPR036822">
    <property type="entry name" value="CutC-like_dom_sf"/>
</dbReference>
<dbReference type="NCBIfam" id="NF008603">
    <property type="entry name" value="PRK11572.1"/>
    <property type="match status" value="1"/>
</dbReference>
<dbReference type="PANTHER" id="PTHR12598">
    <property type="entry name" value="COPPER HOMEOSTASIS PROTEIN CUTC"/>
    <property type="match status" value="1"/>
</dbReference>
<dbReference type="PANTHER" id="PTHR12598:SF0">
    <property type="entry name" value="COPPER HOMEOSTASIS PROTEIN CUTC HOMOLOG"/>
    <property type="match status" value="1"/>
</dbReference>
<dbReference type="Pfam" id="PF03932">
    <property type="entry name" value="CutC"/>
    <property type="match status" value="1"/>
</dbReference>
<dbReference type="SUPFAM" id="SSF110395">
    <property type="entry name" value="CutC-like"/>
    <property type="match status" value="1"/>
</dbReference>
<proteinExistence type="inferred from homology"/>
<evidence type="ECO:0000255" key="1">
    <source>
        <dbReference type="HAMAP-Rule" id="MF_00795"/>
    </source>
</evidence>
<name>CUTC_YERPA</name>
<organism>
    <name type="scientific">Yersinia pestis bv. Antiqua (strain Antiqua)</name>
    <dbReference type="NCBI Taxonomy" id="360102"/>
    <lineage>
        <taxon>Bacteria</taxon>
        <taxon>Pseudomonadati</taxon>
        <taxon>Pseudomonadota</taxon>
        <taxon>Gammaproteobacteria</taxon>
        <taxon>Enterobacterales</taxon>
        <taxon>Yersiniaceae</taxon>
        <taxon>Yersinia</taxon>
    </lineage>
</organism>
<accession>Q1C825</accession>
<protein>
    <recommendedName>
        <fullName evidence="1">PF03932 family protein CutC</fullName>
    </recommendedName>
</protein>
<sequence>MTKLEVCCYSVDCAQIAEKAGADRVELCCGQSEGGVTPSVGALMQARETVTIPVHPIVRPRGGDFCYSSNDFTIMKNDIARIRDLGFAGVVVGVLDTDGHIDMPRMREIMSVSGSLAVTFHRAFDMCQNPMIALKQLAELNVARILTSGQQQNAELGLALLKDLVAATKDQGPIIMAGAGVRLTNMQKFIDAGIRELHSSAGRTVPSTMRYRKAGVTMCADSDVDEFSHYCVDGEVVEAMKSLLVMGSPLAKHT</sequence>